<feature type="chain" id="PRO_0000219010" description="Autophagy protein 5">
    <location>
        <begin position="1"/>
        <end position="294"/>
    </location>
</feature>
<feature type="cross-link" description="Glycyl lysine isopeptide (Lys-Gly) (interchain with G-Cter in ATG12)">
    <location>
        <position position="149"/>
    </location>
</feature>
<feature type="mutagenesis site" description="Loss of conjugation." evidence="26">
    <original>K</original>
    <variation>R</variation>
    <location>
        <position position="149"/>
    </location>
</feature>
<feature type="helix" evidence="29">
    <location>
        <begin position="1"/>
        <end position="9"/>
    </location>
</feature>
<feature type="strand" evidence="29">
    <location>
        <begin position="12"/>
        <end position="19"/>
    </location>
</feature>
<feature type="helix" evidence="29">
    <location>
        <begin position="21"/>
        <end position="23"/>
    </location>
</feature>
<feature type="helix" evidence="29">
    <location>
        <begin position="30"/>
        <end position="33"/>
    </location>
</feature>
<feature type="strand" evidence="29">
    <location>
        <begin position="34"/>
        <end position="43"/>
    </location>
</feature>
<feature type="helix" evidence="29">
    <location>
        <begin position="45"/>
        <end position="48"/>
    </location>
</feature>
<feature type="helix" evidence="29">
    <location>
        <begin position="49"/>
        <end position="56"/>
    </location>
</feature>
<feature type="helix" evidence="29">
    <location>
        <begin position="57"/>
        <end position="59"/>
    </location>
</feature>
<feature type="strand" evidence="29">
    <location>
        <begin position="60"/>
        <end position="62"/>
    </location>
</feature>
<feature type="turn" evidence="30">
    <location>
        <begin position="64"/>
        <end position="66"/>
    </location>
</feature>
<feature type="strand" evidence="29">
    <location>
        <begin position="71"/>
        <end position="76"/>
    </location>
</feature>
<feature type="strand" evidence="29">
    <location>
        <begin position="79"/>
        <end position="81"/>
    </location>
</feature>
<feature type="strand" evidence="28">
    <location>
        <begin position="83"/>
        <end position="85"/>
    </location>
</feature>
<feature type="helix" evidence="29">
    <location>
        <begin position="87"/>
        <end position="95"/>
    </location>
</feature>
<feature type="helix" evidence="29">
    <location>
        <begin position="96"/>
        <end position="98"/>
    </location>
</feature>
<feature type="turn" evidence="28">
    <location>
        <begin position="105"/>
        <end position="107"/>
    </location>
</feature>
<feature type="strand" evidence="29">
    <location>
        <begin position="115"/>
        <end position="125"/>
    </location>
</feature>
<feature type="strand" evidence="28">
    <location>
        <begin position="136"/>
        <end position="138"/>
    </location>
</feature>
<feature type="helix" evidence="29">
    <location>
        <begin position="139"/>
        <end position="156"/>
    </location>
</feature>
<feature type="strand" evidence="29">
    <location>
        <begin position="157"/>
        <end position="159"/>
    </location>
</feature>
<feature type="helix" evidence="29">
    <location>
        <begin position="160"/>
        <end position="163"/>
    </location>
</feature>
<feature type="helix" evidence="29">
    <location>
        <begin position="167"/>
        <end position="179"/>
    </location>
</feature>
<feature type="helix" evidence="29">
    <location>
        <begin position="182"/>
        <end position="192"/>
    </location>
</feature>
<feature type="strand" evidence="29">
    <location>
        <begin position="202"/>
        <end position="205"/>
    </location>
</feature>
<feature type="strand" evidence="29">
    <location>
        <begin position="208"/>
        <end position="212"/>
    </location>
</feature>
<feature type="helix" evidence="29">
    <location>
        <begin position="230"/>
        <end position="232"/>
    </location>
</feature>
<feature type="helix" evidence="29">
    <location>
        <begin position="233"/>
        <end position="236"/>
    </location>
</feature>
<feature type="turn" evidence="29">
    <location>
        <begin position="239"/>
        <end position="241"/>
    </location>
</feature>
<feature type="strand" evidence="29">
    <location>
        <begin position="248"/>
        <end position="252"/>
    </location>
</feature>
<feature type="strand" evidence="29">
    <location>
        <begin position="255"/>
        <end position="257"/>
    </location>
</feature>
<feature type="helix" evidence="29">
    <location>
        <begin position="263"/>
        <end position="270"/>
    </location>
</feature>
<feature type="strand" evidence="29">
    <location>
        <begin position="277"/>
        <end position="283"/>
    </location>
</feature>
<keyword id="KW-0002">3D-structure</keyword>
<keyword id="KW-0072">Autophagy</keyword>
<keyword id="KW-0378">Hydrolase</keyword>
<keyword id="KW-1017">Isopeptide bond</keyword>
<keyword id="KW-0472">Membrane</keyword>
<keyword id="KW-0653">Protein transport</keyword>
<keyword id="KW-1185">Reference proteome</keyword>
<keyword id="KW-0813">Transport</keyword>
<keyword id="KW-0832">Ubl conjugation</keyword>
<sequence>MNDIKQLLWNGELNVLVSIDPSFLMKGSPREIAVLRIRVPRETYLVNYMPLIWNKIKSFLSFDPLTDSEKYFWFEHNKTPIPWNYPVGVLFDCLAGKSATFTTSFENQVKDVLTFLRIHLVMGDSLPPTIIPIASSKTQAEKFWFHQWKQVCFILNGSSKAIMSLSVNEARKFWGSVITRNFQDFIEISNKISSSRPRHIPLIIQTSRTSGTFRISQPTISMTGVNPTLKDIEGDILDVKEGINGNDVMVICQGIEIPWHMLLYDLYSKLRSFDGFLYITLVPIKGGDKASSEL</sequence>
<gene>
    <name type="primary">ATG5</name>
    <name type="synonym">APG5</name>
    <name type="ordered locus">YPL149W</name>
    <name type="ORF">P2601</name>
</gene>
<reference key="1">
    <citation type="journal article" date="1996" name="Gene">
        <title>Structural and functional analyses of APG5, a gene involved in autophagy in yeast.</title>
        <authorList>
            <person name="Kametaka S."/>
            <person name="Matsuura A."/>
            <person name="Wada Y."/>
            <person name="Ohsumi Y."/>
        </authorList>
    </citation>
    <scope>NUCLEOTIDE SEQUENCE [GENOMIC DNA]</scope>
    <scope>FUNCTION</scope>
</reference>
<reference key="2">
    <citation type="journal article" date="1996" name="Yeast">
        <title>The sequence of 55 kb on the left arm of yeast chromosome XVI identifies a small nuclear RNA, a new putative protein kinase and two new putative regulators.</title>
        <authorList>
            <person name="Purnelle B."/>
            <person name="Coster F."/>
            <person name="Goffeau A."/>
        </authorList>
    </citation>
    <scope>NUCLEOTIDE SEQUENCE [GENOMIC DNA]</scope>
    <source>
        <strain>ATCC 204511 / S288c / AB972</strain>
    </source>
</reference>
<reference key="3">
    <citation type="journal article" date="1997" name="Nature">
        <title>The nucleotide sequence of Saccharomyces cerevisiae chromosome XVI.</title>
        <authorList>
            <person name="Bussey H."/>
            <person name="Storms R.K."/>
            <person name="Ahmed A."/>
            <person name="Albermann K."/>
            <person name="Allen E."/>
            <person name="Ansorge W."/>
            <person name="Araujo R."/>
            <person name="Aparicio A."/>
            <person name="Barrell B.G."/>
            <person name="Badcock K."/>
            <person name="Benes V."/>
            <person name="Botstein D."/>
            <person name="Bowman S."/>
            <person name="Brueckner M."/>
            <person name="Carpenter J."/>
            <person name="Cherry J.M."/>
            <person name="Chung E."/>
            <person name="Churcher C.M."/>
            <person name="Coster F."/>
            <person name="Davis K."/>
            <person name="Davis R.W."/>
            <person name="Dietrich F.S."/>
            <person name="Delius H."/>
            <person name="DiPaolo T."/>
            <person name="Dubois E."/>
            <person name="Duesterhoeft A."/>
            <person name="Duncan M."/>
            <person name="Floeth M."/>
            <person name="Fortin N."/>
            <person name="Friesen J.D."/>
            <person name="Fritz C."/>
            <person name="Goffeau A."/>
            <person name="Hall J."/>
            <person name="Hebling U."/>
            <person name="Heumann K."/>
            <person name="Hilbert H."/>
            <person name="Hillier L.W."/>
            <person name="Hunicke-Smith S."/>
            <person name="Hyman R.W."/>
            <person name="Johnston M."/>
            <person name="Kalman S."/>
            <person name="Kleine K."/>
            <person name="Komp C."/>
            <person name="Kurdi O."/>
            <person name="Lashkari D."/>
            <person name="Lew H."/>
            <person name="Lin A."/>
            <person name="Lin D."/>
            <person name="Louis E.J."/>
            <person name="Marathe R."/>
            <person name="Messenguy F."/>
            <person name="Mewes H.-W."/>
            <person name="Mirtipati S."/>
            <person name="Moestl D."/>
            <person name="Mueller-Auer S."/>
            <person name="Namath A."/>
            <person name="Nentwich U."/>
            <person name="Oefner P."/>
            <person name="Pearson D."/>
            <person name="Petel F.X."/>
            <person name="Pohl T.M."/>
            <person name="Purnelle B."/>
            <person name="Rajandream M.A."/>
            <person name="Rechmann S."/>
            <person name="Rieger M."/>
            <person name="Riles L."/>
            <person name="Roberts D."/>
            <person name="Schaefer M."/>
            <person name="Scharfe M."/>
            <person name="Scherens B."/>
            <person name="Schramm S."/>
            <person name="Schroeder M."/>
            <person name="Sdicu A.-M."/>
            <person name="Tettelin H."/>
            <person name="Urrestarazu L.A."/>
            <person name="Ushinsky S."/>
            <person name="Vierendeels F."/>
            <person name="Vissers S."/>
            <person name="Voss H."/>
            <person name="Walsh S.V."/>
            <person name="Wambutt R."/>
            <person name="Wang Y."/>
            <person name="Wedler E."/>
            <person name="Wedler H."/>
            <person name="Winnett E."/>
            <person name="Zhong W.-W."/>
            <person name="Zollner A."/>
            <person name="Vo D.H."/>
            <person name="Hani J."/>
        </authorList>
    </citation>
    <scope>NUCLEOTIDE SEQUENCE [LARGE SCALE GENOMIC DNA]</scope>
    <source>
        <strain>ATCC 204508 / S288c</strain>
    </source>
</reference>
<reference key="4">
    <citation type="journal article" date="2014" name="G3 (Bethesda)">
        <title>The reference genome sequence of Saccharomyces cerevisiae: Then and now.</title>
        <authorList>
            <person name="Engel S.R."/>
            <person name="Dietrich F.S."/>
            <person name="Fisk D.G."/>
            <person name="Binkley G."/>
            <person name="Balakrishnan R."/>
            <person name="Costanzo M.C."/>
            <person name="Dwight S.S."/>
            <person name="Hitz B.C."/>
            <person name="Karra K."/>
            <person name="Nash R.S."/>
            <person name="Weng S."/>
            <person name="Wong E.D."/>
            <person name="Lloyd P."/>
            <person name="Skrzypek M.S."/>
            <person name="Miyasato S.R."/>
            <person name="Simison M."/>
            <person name="Cherry J.M."/>
        </authorList>
    </citation>
    <scope>GENOME REANNOTATION</scope>
    <source>
        <strain>ATCC 204508 / S288c</strain>
    </source>
</reference>
<reference key="5">
    <citation type="journal article" date="1993" name="FEBS Lett.">
        <title>Isolation and characterization of autophagy-defective mutants of Saccharomyces cerevisiae.</title>
        <authorList>
            <person name="Tsukada M."/>
            <person name="Ohsumi Y."/>
        </authorList>
    </citation>
    <scope>FUNCTION</scope>
</reference>
<reference key="6">
    <citation type="journal article" date="1998" name="Nature">
        <title>A protein conjugation system essential for autophagy.</title>
        <authorList>
            <person name="Mizushima N."/>
            <person name="Noda T."/>
            <person name="Yoshimori T."/>
            <person name="Tanaka Y."/>
            <person name="Ishii T."/>
            <person name="George M.D."/>
            <person name="Klionsky D.J."/>
            <person name="Ohsumi M."/>
            <person name="Ohsumi Y."/>
        </authorList>
    </citation>
    <scope>FUNCTION</scope>
    <scope>CONJUGATION TO ATG12</scope>
    <scope>MUTAGENESIS OF LYS-149</scope>
    <source>
        <strain>ATCC 26109 / X2180</strain>
    </source>
</reference>
<reference key="7">
    <citation type="journal article" date="1999" name="EMBO J.">
        <title>Apg16p is required for the function of the Apg12p-Apg5p conjugate in the yeast autophagy pathway.</title>
        <authorList>
            <person name="Mizushima N."/>
            <person name="Noda T."/>
            <person name="Ohsumi Y."/>
        </authorList>
    </citation>
    <scope>FUNCTION</scope>
    <scope>INTERACTION WITH ATG12 AND ATG16</scope>
</reference>
<reference key="8">
    <citation type="journal article" date="2000" name="Mol. Biol. Cell">
        <title>Apg5p functions in the sequestration step in the cytoplasm-to-vacuole targeting and macroautophagy pathways.</title>
        <authorList>
            <person name="George M.D."/>
            <person name="Baba M."/>
            <person name="Scott S.V."/>
            <person name="Mizushima N."/>
            <person name="Garrison B.S."/>
            <person name="Ohsumi Y."/>
            <person name="Klionsky D.J."/>
        </authorList>
    </citation>
    <scope>FUNCTION</scope>
</reference>
<reference key="9">
    <citation type="journal article" date="2001" name="EMBO J.">
        <title>The pre-autophagosomal structure organized by concerted functions of APG genes is essential for autophagosome formation.</title>
        <authorList>
            <person name="Suzuki K."/>
            <person name="Kirisako T."/>
            <person name="Kamada Y."/>
            <person name="Mizushima N."/>
            <person name="Noda T."/>
            <person name="Ohsumi Y."/>
        </authorList>
    </citation>
    <scope>SUBCELLULAR LOCATION</scope>
</reference>
<reference key="10">
    <citation type="journal article" date="2001" name="J. Cell Biol.">
        <title>Membrane recruitment of Aut7p in the autophagy and cytoplasm to vacuole targeting pathways requires Aut1p, Aut2p, and the autophagy conjugation complex.</title>
        <authorList>
            <person name="Kim J."/>
            <person name="Huang W.-P."/>
            <person name="Klionsky D.J."/>
        </authorList>
    </citation>
    <scope>FUNCTION</scope>
</reference>
<reference key="11">
    <citation type="journal article" date="2002" name="J. Biol. Chem.">
        <title>Formation of the approximately 350-kDa Apg12-Apg5.Apg16 multimeric complex, mediated by Apg16 oligomerization, is essential for autophagy in yeast.</title>
        <authorList>
            <person name="Kuma A."/>
            <person name="Mizushima N."/>
            <person name="Ishihara N."/>
            <person name="Ohsumi Y."/>
        </authorList>
    </citation>
    <scope>IDENTIFICATION IN A COMPLEX WITH ATG12 AND ATG16</scope>
</reference>
<reference key="12">
    <citation type="journal article" date="2003" name="Dev. Cell">
        <title>A unified nomenclature for yeast autophagy-related genes.</title>
        <authorList>
            <person name="Klionsky D.J."/>
            <person name="Cregg J.M."/>
            <person name="Dunn W.A. Jr."/>
            <person name="Emr S.D."/>
            <person name="Sakai Y."/>
            <person name="Sandoval I.V."/>
            <person name="Sibirny A."/>
            <person name="Subramani S."/>
            <person name="Thumm M."/>
            <person name="Veenhuis M."/>
            <person name="Ohsumi Y."/>
        </authorList>
    </citation>
    <scope>NOMENCLATURE</scope>
</reference>
<reference key="13">
    <citation type="journal article" date="2003" name="FEBS Lett.">
        <title>The carboxyl terminal 17 amino acids within Apg7 are essential for Apg8 lipidation, but not for Apg12 conjugation.</title>
        <authorList>
            <person name="Yamazaki-Sato H."/>
            <person name="Tanida I."/>
            <person name="Ueno T."/>
            <person name="Kominami E."/>
        </authorList>
    </citation>
    <scope>CONJUGATION TO ATG12</scope>
</reference>
<reference key="14">
    <citation type="journal article" date="2003" name="Nature">
        <title>Global analysis of protein expression in yeast.</title>
        <authorList>
            <person name="Ghaemmaghami S."/>
            <person name="Huh W.-K."/>
            <person name="Bower K."/>
            <person name="Howson R.W."/>
            <person name="Belle A."/>
            <person name="Dephoure N."/>
            <person name="O'Shea E.K."/>
            <person name="Weissman J.S."/>
        </authorList>
    </citation>
    <scope>LEVEL OF PROTEIN EXPRESSION [LARGE SCALE ANALYSIS]</scope>
</reference>
<reference key="15">
    <citation type="journal article" date="2004" name="J. Biol. Chem.">
        <title>Uth1p is involved in the autophagic degradation of mitochondria.</title>
        <authorList>
            <person name="Kissova I."/>
            <person name="Deffieu M."/>
            <person name="Manon S."/>
            <person name="Camougrand N.M."/>
        </authorList>
    </citation>
    <scope>FUNCTION</scope>
</reference>
<reference key="16">
    <citation type="journal article" date="2004" name="Mol. Biol. Cell">
        <title>Atg21 is a phosphoinositide binding protein required for efficient lipidation and localization of Atg8 during uptake of aminopeptidase I by selective autophagy.</title>
        <authorList>
            <person name="Stromhaug P.E."/>
            <person name="Reggiori F."/>
            <person name="Guan J."/>
            <person name="Wang C.-W."/>
            <person name="Klionsky D.J."/>
        </authorList>
    </citation>
    <scope>SUBCELLULAR LOCATION</scope>
</reference>
<reference key="17">
    <citation type="journal article" date="2005" name="Autophagy">
        <title>Structure-function relationship of Atg12, a ubiquitin-like modifier essential for autophagy.</title>
        <authorList>
            <person name="Hanada T."/>
            <person name="Ohsumi Y."/>
        </authorList>
    </citation>
    <scope>FUNCTION</scope>
    <scope>CONJUGATION TO ATG12</scope>
    <scope>INTERACTION WITH ATG16</scope>
</reference>
<reference key="18">
    <citation type="journal article" date="2005" name="Cell Death Differ.">
        <title>Impairing the bioenergetic status and the biogenesis of mitochondria triggers mitophagy in yeast.</title>
        <authorList>
            <person name="Priault M."/>
            <person name="Salin B."/>
            <person name="Schaeffer J."/>
            <person name="Vallette F.M."/>
            <person name="di Rago J.P."/>
            <person name="Martinou J.C."/>
        </authorList>
    </citation>
    <scope>FUNCTION</scope>
</reference>
<reference key="19">
    <citation type="journal article" date="2006" name="Acta Crystallogr. F">
        <title>Expression, purification and crystallization of the Atg5-Atg16 complex essential for autophagy.</title>
        <authorList>
            <person name="Matsushita M."/>
            <person name="Suzuki N.N."/>
            <person name="Fujioka Y."/>
            <person name="Ohsumi Y."/>
            <person name="Inagaki F."/>
        </authorList>
    </citation>
    <scope>CRYSTALLIZATION OF THE ATG5-ATG16 COMPLEX</scope>
</reference>
<reference key="20">
    <citation type="journal article" date="2007" name="Genes Cells">
        <title>Hierarchy of Atg proteins in pre-autophagosomal structure organization.</title>
        <authorList>
            <person name="Suzuki K."/>
            <person name="Kubota Y."/>
            <person name="Sekito T."/>
            <person name="Ohsumi Y."/>
        </authorList>
    </citation>
    <scope>SUBCELLULAR LOCATION</scope>
</reference>
<reference key="21">
    <citation type="journal article" date="2007" name="Genetics">
        <title>An interrelationship between autophagy and filamentous growth in budding yeast.</title>
        <authorList>
            <person name="Ma J."/>
            <person name="Jin R."/>
            <person name="Jia X."/>
            <person name="Dobry C.J."/>
            <person name="Wang L."/>
            <person name="Reggiori F."/>
            <person name="Zhu J."/>
            <person name="Kumar A."/>
        </authorList>
    </citation>
    <scope>FUNCTION</scope>
</reference>
<reference key="22">
    <citation type="journal article" date="2007" name="J. Biol. Chem.">
        <title>The Atg12-Atg5 conjugate has a novel E3-like activity for protein lipidation in autophagy.</title>
        <authorList>
            <person name="Hanada T."/>
            <person name="Noda N.N."/>
            <person name="Satomi Y."/>
            <person name="Ichimura Y."/>
            <person name="Fujioka Y."/>
            <person name="Takao T."/>
            <person name="Inagaki F."/>
            <person name="Ohsumi Y."/>
        </authorList>
    </citation>
    <scope>FUNCTION OF THE ATG12-ATG5 CONJUGATE</scope>
    <scope>INTERACTION WITH ATG3</scope>
</reference>
<reference key="23">
    <citation type="journal article" date="2008" name="Autophagy">
        <title>Localization of autophagy-related proteins in yeast using a versatile plasmid-based resource of fluorescent protein fusions.</title>
        <authorList>
            <person name="Ma J."/>
            <person name="Bharucha N."/>
            <person name="Dobry C.J."/>
            <person name="Frisch R.L."/>
            <person name="Lawson S."/>
            <person name="Kumar A."/>
        </authorList>
    </citation>
    <scope>SUBCELLULAR LOCATION</scope>
</reference>
<reference key="24">
    <citation type="journal article" date="2008" name="J. Cell Biol.">
        <title>Quantitative analysis of autophagy-related protein stoichiometry by fluorescence microscopy.</title>
        <authorList>
            <person name="Geng J."/>
            <person name="Baba M."/>
            <person name="Nair U."/>
            <person name="Klionsky D.J."/>
        </authorList>
    </citation>
    <scope>FUNCTION</scope>
</reference>
<reference key="25">
    <citation type="journal article" date="2008" name="J. Cell Biol.">
        <title>In vivo reconstitution of autophagy in Saccharomyces cerevisiae.</title>
        <authorList>
            <person name="Cao Y."/>
            <person name="Cheong H."/>
            <person name="Song H."/>
            <person name="Klionsky D.J."/>
        </authorList>
    </citation>
    <scope>CONJUGATION TO ATG12</scope>
    <scope>FUNCTION OF THE ATG12-ATG5 CONJUGATE</scope>
</reference>
<reference key="26">
    <citation type="journal article" date="2008" name="J. Synchrotron Radiat.">
        <title>Crystallization of the Atg12-Atg5 conjugate bound to Atg16 by the free-interface diffusion method.</title>
        <authorList>
            <person name="Noda N.N."/>
            <person name="Fujioka Y."/>
            <person name="Ohsumi Y."/>
            <person name="Inagaki F."/>
        </authorList>
    </citation>
    <scope>CRYSTALLIZATION OF THE ATG12-ATG5 CONJUGATE BOUND TO ATG16</scope>
</reference>
<reference key="27">
    <citation type="journal article" date="2008" name="Mol. Biol. Cell">
        <title>Piecemeal microautophagy of the nucleus requires the core macroautophagy genes.</title>
        <authorList>
            <person name="Krick R."/>
            <person name="Muehe Y."/>
            <person name="Prick T."/>
            <person name="Bremer S."/>
            <person name="Schlotterhose P."/>
            <person name="Eskelinen E.L."/>
            <person name="Millen J."/>
            <person name="Goldfarb D.S."/>
            <person name="Thumm M."/>
        </authorList>
    </citation>
    <scope>FUNCTION</scope>
</reference>
<reference key="28">
    <citation type="journal article" date="2011" name="Biochem. Biophys. Res. Commun.">
        <title>Sphingolipid synthesis is involved in autophagy in Saccharomyces cerevisiae.</title>
        <authorList>
            <person name="Yamagata M."/>
            <person name="Obara K."/>
            <person name="Kihara A."/>
        </authorList>
    </citation>
    <scope>CONJUGATION TO ATG12</scope>
</reference>
<reference key="29">
    <citation type="journal article" date="2012" name="EMBO J.">
        <title>Mechanism and functions of membrane binding by the Atg5-Atg12/Atg16 complex during autophagosome formation.</title>
        <authorList>
            <person name="Romanov J."/>
            <person name="Walczak M."/>
            <person name="Ibiricu I."/>
            <person name="Schuchner S."/>
            <person name="Ogris E."/>
            <person name="Kraft C."/>
            <person name="Martens S."/>
        </authorList>
    </citation>
    <scope>SUBCELLULAR LOCATION</scope>
    <scope>FUNCTION OF THE ATG5-ATG12/ATG16 COMPLEX</scope>
</reference>
<reference key="30">
    <citation type="journal article" date="2012" name="PLoS ONE">
        <title>A late form of nucleophagy in Saccharomyces cerevisiae.</title>
        <authorList>
            <person name="Mijaljica D."/>
            <person name="Prescott M."/>
            <person name="Devenish R.J."/>
        </authorList>
    </citation>
    <scope>FUNCTION</scope>
</reference>
<reference key="31">
    <citation type="journal article" date="2013" name="J. Cell Sci.">
        <title>Fine mapping of autophagy-related proteins during autophagosome formation in Saccharomyces cerevisiae.</title>
        <authorList>
            <person name="Suzuki K."/>
            <person name="Akioka M."/>
            <person name="Kondo-Kakuta C."/>
            <person name="Yamamoto H."/>
            <person name="Ohsumi Y."/>
        </authorList>
    </citation>
    <scope>SUBCELLULAR LOCATION</scope>
</reference>
<reference key="32">
    <citation type="journal article" date="2013" name="Nat. Struct. Mol. Biol.">
        <title>Atg12-Atg5 conjugate enhances E2 activity of Atg3 by rearranging its catalytic site.</title>
        <authorList>
            <person name="Sakoh-Nakatogawa M."/>
            <person name="Matoba K."/>
            <person name="Asai E."/>
            <person name="Kirisako H."/>
            <person name="Ishii J."/>
            <person name="Noda N.N."/>
            <person name="Inagaki F."/>
            <person name="Nakatogawa H."/>
            <person name="Ohsumi Y."/>
        </authorList>
    </citation>
    <scope>FUNCTION OF THE ATG12-ATG5 CONJUGATE</scope>
    <scope>INTERACTION WITH ATG3</scope>
</reference>
<reference key="33">
    <citation type="journal article" date="2023" name="Autophagy">
        <title>Upstream open reading frames mediate autophagy-related protein translation.</title>
        <authorList>
            <person name="Yang Y."/>
            <person name="Gatica D."/>
            <person name="Liu X."/>
            <person name="Wu R."/>
            <person name="Kang R."/>
            <person name="Tang D."/>
            <person name="Klionsky D.J."/>
        </authorList>
    </citation>
    <scope>INDUCTION</scope>
</reference>
<reference key="34">
    <citation type="journal article" date="2007" name="J. Biol. Chem.">
        <title>Structure of Atg5.Atg16, a complex essential for autophagy.</title>
        <authorList>
            <person name="Matsushita M."/>
            <person name="Suzuki N.N."/>
            <person name="Obara K."/>
            <person name="Fujioka Y."/>
            <person name="Ohsumi Y."/>
            <person name="Inagaki F."/>
        </authorList>
    </citation>
    <scope>X-RAY CRYSTALLOGRAPHY (1.97 ANGSTROMS) IN COMPLEX WITH ATG16</scope>
</reference>
<reference key="35">
    <citation type="journal article" date="2013" name="EMBO Rep.">
        <title>Structure of the Atg12-Atg5 conjugate reveals a platform for stimulating Atg8-PE conjugation.</title>
        <authorList>
            <person name="Noda N.N."/>
            <person name="Fujioka Y."/>
            <person name="Hanada T."/>
            <person name="Ohsumi Y."/>
            <person name="Inagaki F."/>
        </authorList>
    </citation>
    <scope>X-RAY CRYSTALLOGRAPHY (2.6 ANGSTROMS) OF 1-284 IN CONJUGATION WITH ATG12</scope>
</reference>
<name>ATG5_YEAST</name>
<organism>
    <name type="scientific">Saccharomyces cerevisiae (strain ATCC 204508 / S288c)</name>
    <name type="common">Baker's yeast</name>
    <dbReference type="NCBI Taxonomy" id="559292"/>
    <lineage>
        <taxon>Eukaryota</taxon>
        <taxon>Fungi</taxon>
        <taxon>Dikarya</taxon>
        <taxon>Ascomycota</taxon>
        <taxon>Saccharomycotina</taxon>
        <taxon>Saccharomycetes</taxon>
        <taxon>Saccharomycetales</taxon>
        <taxon>Saccharomycetaceae</taxon>
        <taxon>Saccharomyces</taxon>
    </lineage>
</organism>
<comment type="function">
    <text evidence="1 2 3 8 9 10 13 14 16 17 18 19 20 21 24 25 26">Involved in cytoplasm to vacuole transport (Cvt) and autophagic vesicle formation. Autophagy is essential for maintenance of amino acid levels and protein synthesis under nitrogen starvation. Required for selective autophagic degradation of the nucleus (nucleophagy). Also required for mitophagy, which eliminates defective or superfluous mitochondria in order to fulfill cellular energy requirements and prevent excess ROS production. Conjugation with ATG12, through a ubiquitin-like conjugating system involving ATG7 as an E1-like activating enzyme and ATG10 as an E2-like conjugating enzyme, is essential for its function. The ATG12-ATG5 conjugate acts as an E3-like enzyme which is required for lipidation of ATG8 and ATG8 association to the vesicle membranes. ATG12-ATG5 rearranges the ATG3 catalytic center and enhances its E2 activity. Plays a role in the regulation of filamentous growth and chronological longevity.</text>
</comment>
<comment type="subunit">
    <text evidence="5 11">Conjugated with ATG12. The ATG5-ATG12 conjugate forms a complex with several units of ATG16. The ATG12-ATG5 conjugate also associates with ATG3.</text>
</comment>
<comment type="interaction">
    <interactant intactId="EBI-2664">
        <id>Q12380</id>
    </interactant>
    <interactant intactId="EBI-2692">
        <id>P38316</id>
        <label>ATG12</label>
    </interactant>
    <organismsDiffer>false</organismsDiffer>
    <experiments>9</experiments>
</comment>
<comment type="interaction">
    <interactant intactId="EBI-2664">
        <id>Q12380</id>
    </interactant>
    <interactant intactId="EBI-27344">
        <id>Q03818</id>
        <label>ATG16</label>
    </interactant>
    <organismsDiffer>false</organismsDiffer>
    <experiments>5</experiments>
</comment>
<comment type="subcellular location">
    <subcellularLocation>
        <location evidence="4 7 12 15 20 22">Preautophagosomal structure membrane</location>
        <topology evidence="4 7 12 15 20 22">Peripheral membrane protein</topology>
    </subcellularLocation>
    <text>Localizes to the isolation membrane (IM), a membrane sac which is generated from the pre-autophagosomal structure (PAS). Ultimately, the IM expands to become a mature autophagosome. Also localizes to a dot at the junction between the IM and the vacuolar membrane, termed the vacuole-IM contact site (VICS). Correct localization to the PAS requires ATG21.</text>
</comment>
<comment type="induction">
    <text evidence="23">Translation is induced by nitrogen starvation. Translational repression during nutrient-rich conditions is dependent on 4 uORFs (upstream open reading frames) present in the 5'-UTR of the mRNA; these promote ribosome dissociation. Translational induction occurs in conditions reducing translation machinery efficiency, leading to ribosomes scanning over the uORFs (leaky-scanning), and increased translation of the mRNA.</text>
</comment>
<comment type="PTM">
    <text>Conjugated to ATG12; which is essential for autophagy. Conjugation with ATG12 involves ATG7 as an E1-like activating enzyme and ATG10 as an E2-like conjugating enzyme.</text>
</comment>
<comment type="miscellaneous">
    <text evidence="6">Present with 606 molecules/cell in log phase SD medium.</text>
</comment>
<comment type="miscellaneous">
    <text>Small amount of ATG5-ATG12 conjugate is enough to perform normal autophagy.</text>
</comment>
<comment type="similarity">
    <text evidence="27">Belongs to the ATG5 family.</text>
</comment>
<protein>
    <recommendedName>
        <fullName>Autophagy protein 5</fullName>
    </recommendedName>
</protein>
<dbReference type="EMBL" id="D83519">
    <property type="protein sequence ID" value="BAA11937.1"/>
    <property type="molecule type" value="Genomic_DNA"/>
</dbReference>
<dbReference type="EMBL" id="X96770">
    <property type="protein sequence ID" value="CAA65572.1"/>
    <property type="molecule type" value="Genomic_DNA"/>
</dbReference>
<dbReference type="EMBL" id="Z73505">
    <property type="protein sequence ID" value="CAA97854.1"/>
    <property type="molecule type" value="Genomic_DNA"/>
</dbReference>
<dbReference type="EMBL" id="BK006949">
    <property type="protein sequence ID" value="DAA11286.1"/>
    <property type="molecule type" value="Genomic_DNA"/>
</dbReference>
<dbReference type="PIR" id="S65160">
    <property type="entry name" value="S65160"/>
</dbReference>
<dbReference type="RefSeq" id="NP_015176.1">
    <property type="nucleotide sequence ID" value="NM_001183963.1"/>
</dbReference>
<dbReference type="PDB" id="2DYM">
    <property type="method" value="X-ray"/>
    <property type="resolution" value="2.20 A"/>
    <property type="chains" value="A/C/E/G=1-294"/>
</dbReference>
<dbReference type="PDB" id="2DYO">
    <property type="method" value="X-ray"/>
    <property type="resolution" value="1.97 A"/>
    <property type="chains" value="A=1-294"/>
</dbReference>
<dbReference type="PDB" id="3W1S">
    <property type="method" value="X-ray"/>
    <property type="resolution" value="2.60 A"/>
    <property type="chains" value="A=1-284"/>
</dbReference>
<dbReference type="PDBsum" id="2DYM"/>
<dbReference type="PDBsum" id="2DYO"/>
<dbReference type="PDBsum" id="3W1S"/>
<dbReference type="SMR" id="Q12380"/>
<dbReference type="BioGRID" id="36034">
    <property type="interactions" value="169"/>
</dbReference>
<dbReference type="ComplexPortal" id="CPX-1848">
    <property type="entry name" value="ATG12-ATG5 complex"/>
</dbReference>
<dbReference type="ComplexPortal" id="CPX-1849">
    <property type="entry name" value="ATG12-ATG5-ATG16 complex"/>
</dbReference>
<dbReference type="DIP" id="DIP-1195N"/>
<dbReference type="FunCoup" id="Q12380">
    <property type="interactions" value="436"/>
</dbReference>
<dbReference type="IntAct" id="Q12380">
    <property type="interactions" value="30"/>
</dbReference>
<dbReference type="MINT" id="Q12380"/>
<dbReference type="STRING" id="4932.YPL149W"/>
<dbReference type="PaxDb" id="4932-YPL149W"/>
<dbReference type="PeptideAtlas" id="Q12380"/>
<dbReference type="EnsemblFungi" id="YPL149W_mRNA">
    <property type="protein sequence ID" value="YPL149W"/>
    <property type="gene ID" value="YPL149W"/>
</dbReference>
<dbReference type="GeneID" id="855954"/>
<dbReference type="KEGG" id="sce:YPL149W"/>
<dbReference type="AGR" id="SGD:S000006070"/>
<dbReference type="SGD" id="S000006070">
    <property type="gene designation" value="ATG5"/>
</dbReference>
<dbReference type="VEuPathDB" id="FungiDB:YPL149W"/>
<dbReference type="eggNOG" id="KOG2976">
    <property type="taxonomic scope" value="Eukaryota"/>
</dbReference>
<dbReference type="GeneTree" id="ENSGT00390000004766"/>
<dbReference type="HOGENOM" id="CLU_051894_2_0_1"/>
<dbReference type="InParanoid" id="Q12380"/>
<dbReference type="OMA" id="SIQKAVW"/>
<dbReference type="OrthoDB" id="272162at2759"/>
<dbReference type="BioCyc" id="YEAST:G3O-34046-MONOMER"/>
<dbReference type="Reactome" id="R-SCE-1632852">
    <property type="pathway name" value="Macroautophagy"/>
</dbReference>
<dbReference type="Reactome" id="R-SCE-8934903">
    <property type="pathway name" value="Receptor Mediated Mitophagy"/>
</dbReference>
<dbReference type="BioGRID-ORCS" id="855954">
    <property type="hits" value="1 hit in 10 CRISPR screens"/>
</dbReference>
<dbReference type="EvolutionaryTrace" id="Q12380"/>
<dbReference type="PRO" id="PR:Q12380"/>
<dbReference type="Proteomes" id="UP000002311">
    <property type="component" value="Chromosome XVI"/>
</dbReference>
<dbReference type="RNAct" id="Q12380">
    <property type="molecule type" value="protein"/>
</dbReference>
<dbReference type="GO" id="GO:0034274">
    <property type="term" value="C:Atg12-Atg5-Atg16 complex"/>
    <property type="evidence" value="ECO:0000314"/>
    <property type="project" value="ComplexPortal"/>
</dbReference>
<dbReference type="GO" id="GO:0005776">
    <property type="term" value="C:autophagosome"/>
    <property type="evidence" value="ECO:0000314"/>
    <property type="project" value="SGD"/>
</dbReference>
<dbReference type="GO" id="GO:0005829">
    <property type="term" value="C:cytosol"/>
    <property type="evidence" value="ECO:0000314"/>
    <property type="project" value="ComplexPortal"/>
</dbReference>
<dbReference type="GO" id="GO:0016020">
    <property type="term" value="C:membrane"/>
    <property type="evidence" value="ECO:0000314"/>
    <property type="project" value="SGD"/>
</dbReference>
<dbReference type="GO" id="GO:0005634">
    <property type="term" value="C:nucleus"/>
    <property type="evidence" value="ECO:0007005"/>
    <property type="project" value="SGD"/>
</dbReference>
<dbReference type="GO" id="GO:0061908">
    <property type="term" value="C:phagophore"/>
    <property type="evidence" value="ECO:0000314"/>
    <property type="project" value="SGD"/>
</dbReference>
<dbReference type="GO" id="GO:0000407">
    <property type="term" value="C:phagophore assembly site"/>
    <property type="evidence" value="ECO:0000314"/>
    <property type="project" value="SGD"/>
</dbReference>
<dbReference type="GO" id="GO:0034045">
    <property type="term" value="C:phagophore assembly site membrane"/>
    <property type="evidence" value="ECO:0000318"/>
    <property type="project" value="GO_Central"/>
</dbReference>
<dbReference type="GO" id="GO:1990234">
    <property type="term" value="C:transferase complex"/>
    <property type="evidence" value="ECO:0000314"/>
    <property type="project" value="ComplexPortal"/>
</dbReference>
<dbReference type="GO" id="GO:0120095">
    <property type="term" value="C:vacuole-isolation membrane contact site"/>
    <property type="evidence" value="ECO:0000314"/>
    <property type="project" value="SGD"/>
</dbReference>
<dbReference type="GO" id="GO:0140355">
    <property type="term" value="F:cargo receptor ligand activity"/>
    <property type="evidence" value="ECO:0000314"/>
    <property type="project" value="SGD"/>
</dbReference>
<dbReference type="GO" id="GO:0008047">
    <property type="term" value="F:enzyme activator activity"/>
    <property type="evidence" value="ECO:0000314"/>
    <property type="project" value="SGD"/>
</dbReference>
<dbReference type="GO" id="GO:0016787">
    <property type="term" value="F:hydrolase activity"/>
    <property type="evidence" value="ECO:0007669"/>
    <property type="project" value="UniProtKB-KW"/>
</dbReference>
<dbReference type="GO" id="GO:0035973">
    <property type="term" value="P:aggrephagy"/>
    <property type="evidence" value="ECO:0000318"/>
    <property type="project" value="GO_Central"/>
</dbReference>
<dbReference type="GO" id="GO:0000045">
    <property type="term" value="P:autophagosome assembly"/>
    <property type="evidence" value="ECO:0000318"/>
    <property type="project" value="GO_Central"/>
</dbReference>
<dbReference type="GO" id="GO:0006995">
    <property type="term" value="P:cellular response to nitrogen starvation"/>
    <property type="evidence" value="ECO:0000318"/>
    <property type="project" value="GO_Central"/>
</dbReference>
<dbReference type="GO" id="GO:0051365">
    <property type="term" value="P:cellular response to potassium ion starvation"/>
    <property type="evidence" value="ECO:0000315"/>
    <property type="project" value="SGD"/>
</dbReference>
<dbReference type="GO" id="GO:0032258">
    <property type="term" value="P:cytoplasm to vacuole targeting by the Cvt pathway"/>
    <property type="evidence" value="ECO:0000315"/>
    <property type="project" value="SGD"/>
</dbReference>
<dbReference type="GO" id="GO:0016236">
    <property type="term" value="P:macroautophagy"/>
    <property type="evidence" value="ECO:0000314"/>
    <property type="project" value="ComplexPortal"/>
</dbReference>
<dbReference type="GO" id="GO:0000423">
    <property type="term" value="P:mitophagy"/>
    <property type="evidence" value="ECO:0000315"/>
    <property type="project" value="SGD"/>
</dbReference>
<dbReference type="GO" id="GO:0044804">
    <property type="term" value="P:nucleophagy"/>
    <property type="evidence" value="ECO:0000315"/>
    <property type="project" value="SGD"/>
</dbReference>
<dbReference type="GO" id="GO:0034727">
    <property type="term" value="P:piecemeal microautophagy of the nucleus"/>
    <property type="evidence" value="ECO:0000315"/>
    <property type="project" value="SGD"/>
</dbReference>
<dbReference type="Gene3D" id="3.10.20.620">
    <property type="match status" value="1"/>
</dbReference>
<dbReference type="Gene3D" id="1.10.246.190">
    <property type="entry name" value="Autophagy protein Apg5, helix rich domain"/>
    <property type="match status" value="1"/>
</dbReference>
<dbReference type="Gene3D" id="3.10.20.90">
    <property type="entry name" value="Phosphatidylinositol 3-kinase Catalytic Subunit, Chain A, domain 1"/>
    <property type="match status" value="1"/>
</dbReference>
<dbReference type="IDEAL" id="IID50256"/>
<dbReference type="InterPro" id="IPR007239">
    <property type="entry name" value="Atg5"/>
</dbReference>
<dbReference type="InterPro" id="IPR048940">
    <property type="entry name" value="ATG5_HBR"/>
</dbReference>
<dbReference type="InterPro" id="IPR042526">
    <property type="entry name" value="Atg5_HR"/>
</dbReference>
<dbReference type="InterPro" id="IPR048939">
    <property type="entry name" value="ATG5_UblA"/>
</dbReference>
<dbReference type="InterPro" id="IPR042527">
    <property type="entry name" value="Atg5_UblA_dom_sf"/>
</dbReference>
<dbReference type="InterPro" id="IPR048318">
    <property type="entry name" value="ATG5_UblB"/>
</dbReference>
<dbReference type="PANTHER" id="PTHR13040">
    <property type="entry name" value="AUTOPHAGY PROTEIN 5"/>
    <property type="match status" value="1"/>
</dbReference>
<dbReference type="PANTHER" id="PTHR13040:SF2">
    <property type="entry name" value="AUTOPHAGY PROTEIN 5"/>
    <property type="match status" value="1"/>
</dbReference>
<dbReference type="Pfam" id="PF20637">
    <property type="entry name" value="ATG5_HBR"/>
    <property type="match status" value="1"/>
</dbReference>
<dbReference type="Pfam" id="PF20638">
    <property type="entry name" value="ATG5_UblA"/>
    <property type="match status" value="1"/>
</dbReference>
<dbReference type="Pfam" id="PF04106">
    <property type="entry name" value="ATG5_UblB"/>
    <property type="match status" value="1"/>
</dbReference>
<evidence type="ECO:0000269" key="1">
    <source>
    </source>
</evidence>
<evidence type="ECO:0000269" key="2">
    <source>
    </source>
</evidence>
<evidence type="ECO:0000269" key="3">
    <source>
    </source>
</evidence>
<evidence type="ECO:0000269" key="4">
    <source>
    </source>
</evidence>
<evidence type="ECO:0000269" key="5">
    <source>
    </source>
</evidence>
<evidence type="ECO:0000269" key="6">
    <source>
    </source>
</evidence>
<evidence type="ECO:0000269" key="7">
    <source>
    </source>
</evidence>
<evidence type="ECO:0000269" key="8">
    <source>
    </source>
</evidence>
<evidence type="ECO:0000269" key="9">
    <source>
    </source>
</evidence>
<evidence type="ECO:0000269" key="10">
    <source>
    </source>
</evidence>
<evidence type="ECO:0000269" key="11">
    <source>
    </source>
</evidence>
<evidence type="ECO:0000269" key="12">
    <source>
    </source>
</evidence>
<evidence type="ECO:0000269" key="13">
    <source>
    </source>
</evidence>
<evidence type="ECO:0000269" key="14">
    <source>
    </source>
</evidence>
<evidence type="ECO:0000269" key="15">
    <source>
    </source>
</evidence>
<evidence type="ECO:0000269" key="16">
    <source>
    </source>
</evidence>
<evidence type="ECO:0000269" key="17">
    <source>
    </source>
</evidence>
<evidence type="ECO:0000269" key="18">
    <source>
    </source>
</evidence>
<evidence type="ECO:0000269" key="19">
    <source>
    </source>
</evidence>
<evidence type="ECO:0000269" key="20">
    <source>
    </source>
</evidence>
<evidence type="ECO:0000269" key="21">
    <source>
    </source>
</evidence>
<evidence type="ECO:0000269" key="22">
    <source>
    </source>
</evidence>
<evidence type="ECO:0000269" key="23">
    <source>
    </source>
</evidence>
<evidence type="ECO:0000269" key="24">
    <source>
    </source>
</evidence>
<evidence type="ECO:0000269" key="25">
    <source>
    </source>
</evidence>
<evidence type="ECO:0000269" key="26">
    <source>
    </source>
</evidence>
<evidence type="ECO:0000305" key="27"/>
<evidence type="ECO:0007829" key="28">
    <source>
        <dbReference type="PDB" id="2DYM"/>
    </source>
</evidence>
<evidence type="ECO:0007829" key="29">
    <source>
        <dbReference type="PDB" id="2DYO"/>
    </source>
</evidence>
<evidence type="ECO:0007829" key="30">
    <source>
        <dbReference type="PDB" id="3W1S"/>
    </source>
</evidence>
<accession>Q12380</accession>
<accession>D6W3M0</accession>
<proteinExistence type="evidence at protein level"/>